<sequence>MKVTLPDFRRAGVLVVGDVMLDRYWYGPTSRISPEAPVPVVKVDTIEERPGGAANVAMNIASLGAVARLVGLTGIDDAARALICKLSEVRVRCDFVSVPTHPTITKLRVLSRNQQLIRLDFEEGFDGVDPTPIFERIQLALPQIGALVLSDYAKGALNSVQPMIQLARKANVPVLIDPKGSDFERYRGATLLTPNLSEFEAVVGRCKNEEELVNRGMQLVADFELSALLVTRSEQGMTLLQLGKPPLHLPTQAKEVFDVTGAGDTVIGVLAAALAAGNSLEESCFLANAAAGVVVGKLGTSTVSPIELENAIRGRAETGFGVMDEQQLKIAVAQARQRGEKVVMTNGIFDILHAGHVSYLANARKLGDRLIVAVNSDASTKRLKGEKRPVNPLEQRMVVLGALEAVDWVVPFEEDTPQRLIADILPDLLVKGGDYKPHEIAGSEEVWAAGGEVKVLNFEDGVSTTNIIQSIKNGRG</sequence>
<feature type="chain" id="PRO_0000323497" description="Bifunctional protein HldE">
    <location>
        <begin position="1"/>
        <end position="476"/>
    </location>
</feature>
<feature type="region of interest" description="Ribokinase">
    <location>
        <begin position="1"/>
        <end position="318"/>
    </location>
</feature>
<feature type="region of interest" description="Cytidylyltransferase">
    <location>
        <begin position="344"/>
        <end position="476"/>
    </location>
</feature>
<feature type="active site" evidence="1">
    <location>
        <position position="264"/>
    </location>
</feature>
<feature type="binding site" evidence="1">
    <location>
        <begin position="195"/>
        <end position="198"/>
    </location>
    <ligand>
        <name>ATP</name>
        <dbReference type="ChEBI" id="CHEBI:30616"/>
    </ligand>
</feature>
<protein>
    <recommendedName>
        <fullName evidence="1">Bifunctional protein HldE</fullName>
    </recommendedName>
    <domain>
        <recommendedName>
            <fullName evidence="1">D-beta-D-heptose 7-phosphate kinase</fullName>
            <ecNumber evidence="1">2.7.1.167</ecNumber>
        </recommendedName>
        <alternativeName>
            <fullName evidence="1">D-beta-D-heptose 7-phosphotransferase</fullName>
        </alternativeName>
        <alternativeName>
            <fullName evidence="1">D-glycero-beta-D-manno-heptose-7-phosphate kinase</fullName>
        </alternativeName>
    </domain>
    <domain>
        <recommendedName>
            <fullName evidence="1">D-beta-D-heptose 1-phosphate adenylyltransferase</fullName>
            <ecNumber evidence="1">2.7.7.70</ecNumber>
        </recommendedName>
        <alternativeName>
            <fullName evidence="1">D-glycero-beta-D-manno-heptose 1-phosphate adenylyltransferase</fullName>
        </alternativeName>
    </domain>
</protein>
<comment type="function">
    <text evidence="1">Catalyzes the phosphorylation of D-glycero-D-manno-heptose 7-phosphate at the C-1 position to selectively form D-glycero-beta-D-manno-heptose-1,7-bisphosphate.</text>
</comment>
<comment type="function">
    <text evidence="1">Catalyzes the ADP transfer from ATP to D-glycero-beta-D-manno-heptose 1-phosphate, yielding ADP-D-glycero-beta-D-manno-heptose.</text>
</comment>
<comment type="catalytic activity">
    <reaction evidence="1">
        <text>D-glycero-beta-D-manno-heptose 7-phosphate + ATP = D-glycero-beta-D-manno-heptose 1,7-bisphosphate + ADP + H(+)</text>
        <dbReference type="Rhea" id="RHEA:27473"/>
        <dbReference type="ChEBI" id="CHEBI:15378"/>
        <dbReference type="ChEBI" id="CHEBI:30616"/>
        <dbReference type="ChEBI" id="CHEBI:60204"/>
        <dbReference type="ChEBI" id="CHEBI:60208"/>
        <dbReference type="ChEBI" id="CHEBI:456216"/>
        <dbReference type="EC" id="2.7.1.167"/>
    </reaction>
</comment>
<comment type="catalytic activity">
    <reaction evidence="1">
        <text>D-glycero-beta-D-manno-heptose 1-phosphate + ATP + H(+) = ADP-D-glycero-beta-D-manno-heptose + diphosphate</text>
        <dbReference type="Rhea" id="RHEA:27465"/>
        <dbReference type="ChEBI" id="CHEBI:15378"/>
        <dbReference type="ChEBI" id="CHEBI:30616"/>
        <dbReference type="ChEBI" id="CHEBI:33019"/>
        <dbReference type="ChEBI" id="CHEBI:59967"/>
        <dbReference type="ChEBI" id="CHEBI:61593"/>
        <dbReference type="EC" id="2.7.7.70"/>
    </reaction>
</comment>
<comment type="pathway">
    <text evidence="1">Nucleotide-sugar biosynthesis; ADP-L-glycero-beta-D-manno-heptose biosynthesis; ADP-L-glycero-beta-D-manno-heptose from D-glycero-beta-D-manno-heptose 7-phosphate: step 1/4.</text>
</comment>
<comment type="pathway">
    <text evidence="1">Nucleotide-sugar biosynthesis; ADP-L-glycero-beta-D-manno-heptose biosynthesis; ADP-L-glycero-beta-D-manno-heptose from D-glycero-beta-D-manno-heptose 7-phosphate: step 3/4.</text>
</comment>
<comment type="subunit">
    <text evidence="1">Homodimer.</text>
</comment>
<comment type="similarity">
    <text evidence="1">In the N-terminal section; belongs to the carbohydrate kinase PfkB family.</text>
</comment>
<comment type="similarity">
    <text evidence="1">In the C-terminal section; belongs to the cytidylyltransferase family.</text>
</comment>
<evidence type="ECO:0000255" key="1">
    <source>
        <dbReference type="HAMAP-Rule" id="MF_01603"/>
    </source>
</evidence>
<name>HLDE_YERP3</name>
<accession>A7FE79</accession>
<proteinExistence type="inferred from homology"/>
<keyword id="KW-0067">ATP-binding</keyword>
<keyword id="KW-0119">Carbohydrate metabolism</keyword>
<keyword id="KW-0418">Kinase</keyword>
<keyword id="KW-0511">Multifunctional enzyme</keyword>
<keyword id="KW-0547">Nucleotide-binding</keyword>
<keyword id="KW-0548">Nucleotidyltransferase</keyword>
<keyword id="KW-0808">Transferase</keyword>
<dbReference type="EC" id="2.7.1.167" evidence="1"/>
<dbReference type="EC" id="2.7.7.70" evidence="1"/>
<dbReference type="EMBL" id="CP000720">
    <property type="protein sequence ID" value="ABS49525.1"/>
    <property type="molecule type" value="Genomic_DNA"/>
</dbReference>
<dbReference type="RefSeq" id="WP_011193099.1">
    <property type="nucleotide sequence ID" value="NC_009708.1"/>
</dbReference>
<dbReference type="SMR" id="A7FE79"/>
<dbReference type="GeneID" id="49784608"/>
<dbReference type="KEGG" id="ypi:YpsIP31758_0564"/>
<dbReference type="HOGENOM" id="CLU_021150_2_1_6"/>
<dbReference type="UniPathway" id="UPA00356">
    <property type="reaction ID" value="UER00437"/>
</dbReference>
<dbReference type="UniPathway" id="UPA00356">
    <property type="reaction ID" value="UER00439"/>
</dbReference>
<dbReference type="Proteomes" id="UP000002412">
    <property type="component" value="Chromosome"/>
</dbReference>
<dbReference type="GO" id="GO:0005829">
    <property type="term" value="C:cytosol"/>
    <property type="evidence" value="ECO:0007669"/>
    <property type="project" value="TreeGrafter"/>
</dbReference>
<dbReference type="GO" id="GO:0005524">
    <property type="term" value="F:ATP binding"/>
    <property type="evidence" value="ECO:0007669"/>
    <property type="project" value="UniProtKB-UniRule"/>
</dbReference>
<dbReference type="GO" id="GO:0033785">
    <property type="term" value="F:heptose 7-phosphate kinase activity"/>
    <property type="evidence" value="ECO:0007669"/>
    <property type="project" value="UniProtKB-UniRule"/>
</dbReference>
<dbReference type="GO" id="GO:0033786">
    <property type="term" value="F:heptose-1-phosphate adenylyltransferase activity"/>
    <property type="evidence" value="ECO:0007669"/>
    <property type="project" value="UniProtKB-UniRule"/>
</dbReference>
<dbReference type="GO" id="GO:0016773">
    <property type="term" value="F:phosphotransferase activity, alcohol group as acceptor"/>
    <property type="evidence" value="ECO:0007669"/>
    <property type="project" value="InterPro"/>
</dbReference>
<dbReference type="GO" id="GO:0097171">
    <property type="term" value="P:ADP-L-glycero-beta-D-manno-heptose biosynthetic process"/>
    <property type="evidence" value="ECO:0007669"/>
    <property type="project" value="UniProtKB-UniPathway"/>
</dbReference>
<dbReference type="CDD" id="cd01172">
    <property type="entry name" value="RfaE_like"/>
    <property type="match status" value="1"/>
</dbReference>
<dbReference type="FunFam" id="3.40.1190.20:FF:000002">
    <property type="entry name" value="Bifunctional protein HldE"/>
    <property type="match status" value="1"/>
</dbReference>
<dbReference type="FunFam" id="3.40.50.620:FF:000028">
    <property type="entry name" value="Bifunctional protein HldE"/>
    <property type="match status" value="1"/>
</dbReference>
<dbReference type="Gene3D" id="3.40.1190.20">
    <property type="match status" value="1"/>
</dbReference>
<dbReference type="Gene3D" id="3.40.50.620">
    <property type="entry name" value="HUPs"/>
    <property type="match status" value="1"/>
</dbReference>
<dbReference type="HAMAP" id="MF_01603">
    <property type="entry name" value="HldE"/>
    <property type="match status" value="1"/>
</dbReference>
<dbReference type="InterPro" id="IPR023030">
    <property type="entry name" value="Bifunc_HldE"/>
</dbReference>
<dbReference type="InterPro" id="IPR002173">
    <property type="entry name" value="Carboh/pur_kinase_PfkB_CS"/>
</dbReference>
<dbReference type="InterPro" id="IPR004821">
    <property type="entry name" value="Cyt_trans-like"/>
</dbReference>
<dbReference type="InterPro" id="IPR011611">
    <property type="entry name" value="PfkB_dom"/>
</dbReference>
<dbReference type="InterPro" id="IPR011913">
    <property type="entry name" value="RfaE_dom_I"/>
</dbReference>
<dbReference type="InterPro" id="IPR011914">
    <property type="entry name" value="RfaE_dom_II"/>
</dbReference>
<dbReference type="InterPro" id="IPR029056">
    <property type="entry name" value="Ribokinase-like"/>
</dbReference>
<dbReference type="InterPro" id="IPR014729">
    <property type="entry name" value="Rossmann-like_a/b/a_fold"/>
</dbReference>
<dbReference type="NCBIfam" id="TIGR00125">
    <property type="entry name" value="cyt_tran_rel"/>
    <property type="match status" value="1"/>
</dbReference>
<dbReference type="NCBIfam" id="NF008454">
    <property type="entry name" value="PRK11316.1"/>
    <property type="match status" value="1"/>
</dbReference>
<dbReference type="NCBIfam" id="TIGR02198">
    <property type="entry name" value="rfaE_dom_I"/>
    <property type="match status" value="1"/>
</dbReference>
<dbReference type="NCBIfam" id="TIGR02199">
    <property type="entry name" value="rfaE_dom_II"/>
    <property type="match status" value="1"/>
</dbReference>
<dbReference type="PANTHER" id="PTHR46969">
    <property type="entry name" value="BIFUNCTIONAL PROTEIN HLDE"/>
    <property type="match status" value="1"/>
</dbReference>
<dbReference type="PANTHER" id="PTHR46969:SF1">
    <property type="entry name" value="BIFUNCTIONAL PROTEIN HLDE"/>
    <property type="match status" value="1"/>
</dbReference>
<dbReference type="Pfam" id="PF01467">
    <property type="entry name" value="CTP_transf_like"/>
    <property type="match status" value="1"/>
</dbReference>
<dbReference type="Pfam" id="PF00294">
    <property type="entry name" value="PfkB"/>
    <property type="match status" value="1"/>
</dbReference>
<dbReference type="SUPFAM" id="SSF52374">
    <property type="entry name" value="Nucleotidylyl transferase"/>
    <property type="match status" value="1"/>
</dbReference>
<dbReference type="SUPFAM" id="SSF53613">
    <property type="entry name" value="Ribokinase-like"/>
    <property type="match status" value="1"/>
</dbReference>
<dbReference type="PROSITE" id="PS00583">
    <property type="entry name" value="PFKB_KINASES_1"/>
    <property type="match status" value="1"/>
</dbReference>
<reference key="1">
    <citation type="journal article" date="2007" name="PLoS Genet.">
        <title>The complete genome sequence of Yersinia pseudotuberculosis IP31758, the causative agent of Far East scarlet-like fever.</title>
        <authorList>
            <person name="Eppinger M."/>
            <person name="Rosovitz M.J."/>
            <person name="Fricke W.F."/>
            <person name="Rasko D.A."/>
            <person name="Kokorina G."/>
            <person name="Fayolle C."/>
            <person name="Lindler L.E."/>
            <person name="Carniel E."/>
            <person name="Ravel J."/>
        </authorList>
    </citation>
    <scope>NUCLEOTIDE SEQUENCE [LARGE SCALE GENOMIC DNA]</scope>
    <source>
        <strain>IP 31758</strain>
    </source>
</reference>
<gene>
    <name evidence="1" type="primary">hldE</name>
    <name type="ordered locus">YpsIP31758_0564</name>
</gene>
<organism>
    <name type="scientific">Yersinia pseudotuberculosis serotype O:1b (strain IP 31758)</name>
    <dbReference type="NCBI Taxonomy" id="349747"/>
    <lineage>
        <taxon>Bacteria</taxon>
        <taxon>Pseudomonadati</taxon>
        <taxon>Pseudomonadota</taxon>
        <taxon>Gammaproteobacteria</taxon>
        <taxon>Enterobacterales</taxon>
        <taxon>Yersiniaceae</taxon>
        <taxon>Yersinia</taxon>
    </lineage>
</organism>